<dbReference type="EC" id="3.1.3.-" evidence="6"/>
<dbReference type="EMBL" id="BC049995">
    <property type="protein sequence ID" value="AAH49995.1"/>
    <property type="molecule type" value="mRNA"/>
</dbReference>
<dbReference type="EMBL" id="BC147843">
    <property type="protein sequence ID" value="AAI47844.1"/>
    <property type="molecule type" value="mRNA"/>
</dbReference>
<dbReference type="EMBL" id="BC147850">
    <property type="protein sequence ID" value="AAI47851.1"/>
    <property type="molecule type" value="mRNA"/>
</dbReference>
<dbReference type="CCDS" id="CCDS15083.1"/>
<dbReference type="RefSeq" id="NP_001004173.1">
    <property type="nucleotide sequence ID" value="NM_001004173.2"/>
</dbReference>
<dbReference type="RefSeq" id="XP_030111230.1">
    <property type="nucleotide sequence ID" value="XM_030255370.2"/>
</dbReference>
<dbReference type="SMR" id="Q810K3"/>
<dbReference type="FunCoup" id="Q810K3">
    <property type="interactions" value="582"/>
</dbReference>
<dbReference type="STRING" id="10090.ENSMUSP00000036656"/>
<dbReference type="GlyGen" id="Q810K3">
    <property type="glycosylation" value="1 site"/>
</dbReference>
<dbReference type="iPTMnet" id="Q810K3"/>
<dbReference type="PhosphoSitePlus" id="Q810K3"/>
<dbReference type="PaxDb" id="10090-ENSMUSP00000036656"/>
<dbReference type="ProteomicsDB" id="261014"/>
<dbReference type="Antibodypedia" id="34359">
    <property type="antibodies" value="82 antibodies from 18 providers"/>
</dbReference>
<dbReference type="DNASU" id="433323"/>
<dbReference type="Ensembl" id="ENSMUST00000036172.10">
    <property type="protein sequence ID" value="ENSMUSP00000036656.9"/>
    <property type="gene ID" value="ENSMUSG00000032908.10"/>
</dbReference>
<dbReference type="GeneID" id="433323"/>
<dbReference type="KEGG" id="mmu:433323"/>
<dbReference type="UCSC" id="uc007bqe.1">
    <property type="organism name" value="mouse"/>
</dbReference>
<dbReference type="AGR" id="MGI:3589109"/>
<dbReference type="CTD" id="130367"/>
<dbReference type="MGI" id="MGI:3589109">
    <property type="gene designation" value="Sgpp2"/>
</dbReference>
<dbReference type="VEuPathDB" id="HostDB:ENSMUSG00000032908"/>
<dbReference type="eggNOG" id="KOG2822">
    <property type="taxonomic scope" value="Eukaryota"/>
</dbReference>
<dbReference type="GeneTree" id="ENSGT00940000159500"/>
<dbReference type="HOGENOM" id="CLU_043042_1_0_1"/>
<dbReference type="InParanoid" id="Q810K3"/>
<dbReference type="OMA" id="KFMVGIV"/>
<dbReference type="OrthoDB" id="301434at2759"/>
<dbReference type="PhylomeDB" id="Q810K3"/>
<dbReference type="TreeFam" id="TF323419"/>
<dbReference type="Reactome" id="R-MMU-9845614">
    <property type="pathway name" value="Sphingolipid catabolism"/>
</dbReference>
<dbReference type="BioGRID-ORCS" id="433323">
    <property type="hits" value="2 hits in 77 CRISPR screens"/>
</dbReference>
<dbReference type="ChiTaRS" id="Sgpp2">
    <property type="organism name" value="mouse"/>
</dbReference>
<dbReference type="PRO" id="PR:Q810K3"/>
<dbReference type="Proteomes" id="UP000000589">
    <property type="component" value="Chromosome 1"/>
</dbReference>
<dbReference type="RNAct" id="Q810K3">
    <property type="molecule type" value="protein"/>
</dbReference>
<dbReference type="Bgee" id="ENSMUSG00000032908">
    <property type="expression patterns" value="Expressed in epithelium of small intestine and 144 other cell types or tissues"/>
</dbReference>
<dbReference type="GO" id="GO:0005789">
    <property type="term" value="C:endoplasmic reticulum membrane"/>
    <property type="evidence" value="ECO:0007669"/>
    <property type="project" value="UniProtKB-SubCell"/>
</dbReference>
<dbReference type="GO" id="GO:0070780">
    <property type="term" value="F:dihydrosphingosine-1-phosphate phosphatase activity"/>
    <property type="evidence" value="ECO:0007669"/>
    <property type="project" value="RHEA"/>
</dbReference>
<dbReference type="GO" id="GO:0042392">
    <property type="term" value="F:sphingosine-1-phosphate phosphatase activity"/>
    <property type="evidence" value="ECO:0000315"/>
    <property type="project" value="UniProtKB"/>
</dbReference>
<dbReference type="GO" id="GO:0061469">
    <property type="term" value="P:regulation of type B pancreatic cell proliferation"/>
    <property type="evidence" value="ECO:0000315"/>
    <property type="project" value="UniProtKB"/>
</dbReference>
<dbReference type="GO" id="GO:0006670">
    <property type="term" value="P:sphingosine metabolic process"/>
    <property type="evidence" value="ECO:0007669"/>
    <property type="project" value="Ensembl"/>
</dbReference>
<dbReference type="CDD" id="cd03388">
    <property type="entry name" value="PAP2_SPPase1"/>
    <property type="match status" value="1"/>
</dbReference>
<dbReference type="FunFam" id="1.20.144.10:FF:000011">
    <property type="entry name" value="sphingosine-1-phosphate phosphatase 1"/>
    <property type="match status" value="1"/>
</dbReference>
<dbReference type="Gene3D" id="1.20.144.10">
    <property type="entry name" value="Phosphatidic acid phosphatase type 2/haloperoxidase"/>
    <property type="match status" value="1"/>
</dbReference>
<dbReference type="InterPro" id="IPR036938">
    <property type="entry name" value="P_Acid_Pase_2/haloperoxi_sf"/>
</dbReference>
<dbReference type="InterPro" id="IPR000326">
    <property type="entry name" value="P_Acid_Pase_2/haloperoxidase"/>
</dbReference>
<dbReference type="PANTHER" id="PTHR14969:SF14">
    <property type="entry name" value="SPHINGOSINE-1-PHOSPHATE PHOSPHATASE 2"/>
    <property type="match status" value="1"/>
</dbReference>
<dbReference type="PANTHER" id="PTHR14969">
    <property type="entry name" value="SPHINGOSINE-1-PHOSPHATE PHOSPHOHYDROLASE"/>
    <property type="match status" value="1"/>
</dbReference>
<dbReference type="Pfam" id="PF01569">
    <property type="entry name" value="PAP2"/>
    <property type="match status" value="1"/>
</dbReference>
<dbReference type="SMART" id="SM00014">
    <property type="entry name" value="acidPPc"/>
    <property type="match status" value="1"/>
</dbReference>
<dbReference type="SUPFAM" id="SSF48317">
    <property type="entry name" value="Acid phosphatase/Vanadium-dependent haloperoxidase"/>
    <property type="match status" value="1"/>
</dbReference>
<keyword id="KW-0256">Endoplasmic reticulum</keyword>
<keyword id="KW-0378">Hydrolase</keyword>
<keyword id="KW-0443">Lipid metabolism</keyword>
<keyword id="KW-0472">Membrane</keyword>
<keyword id="KW-1185">Reference proteome</keyword>
<keyword id="KW-0812">Transmembrane</keyword>
<keyword id="KW-1133">Transmembrane helix</keyword>
<name>SGPP2_MOUSE</name>
<comment type="function">
    <text evidence="2 3 6 8">Has specific phosphohydrolase activity towards sphingoid base 1-phosphates. Has high phosphohydrolase activity against dihydrosphingosine-1-phosphate and sphingosine-1-phosphate (S1P) in vitro (Probable). Sphingosine-1-phosphate phosphatase activity is needed for efficient recycling of sphingosine into the sphingolipid synthesis pathway (By similarity). May play a role in attenuating intracellular sphingosine 1-phosphate (S1P) signaling. May play a role in pro-inflammatory signaling (By similarity). Plays a role in the regulation of pancreatic islet beta-cell endoplasmic reticulum stress and proliferation (PubMed:27059959).</text>
</comment>
<comment type="catalytic activity">
    <reaction evidence="2">
        <text>sphinganine 1-phosphate + H2O = sphinganine + phosphate</text>
        <dbReference type="Rhea" id="RHEA:27514"/>
        <dbReference type="ChEBI" id="CHEBI:15377"/>
        <dbReference type="ChEBI" id="CHEBI:43474"/>
        <dbReference type="ChEBI" id="CHEBI:57817"/>
        <dbReference type="ChEBI" id="CHEBI:57939"/>
    </reaction>
    <physiologicalReaction direction="left-to-right" evidence="2">
        <dbReference type="Rhea" id="RHEA:27515"/>
    </physiologicalReaction>
</comment>
<comment type="catalytic activity">
    <reaction evidence="6">
        <text>sphing-4-enine 1-phosphate + H2O = sphing-4-enine + phosphate</text>
        <dbReference type="Rhea" id="RHEA:27518"/>
        <dbReference type="ChEBI" id="CHEBI:15377"/>
        <dbReference type="ChEBI" id="CHEBI:43474"/>
        <dbReference type="ChEBI" id="CHEBI:57756"/>
        <dbReference type="ChEBI" id="CHEBI:60119"/>
    </reaction>
    <physiologicalReaction direction="left-to-right" evidence="6">
        <dbReference type="Rhea" id="RHEA:27519"/>
    </physiologicalReaction>
</comment>
<comment type="catalytic activity">
    <reaction evidence="2">
        <text>(4R)-hydroxysphinganine 1-phosphate + H2O = (4R)-hydroxysphinganine + phosphate</text>
        <dbReference type="Rhea" id="RHEA:33067"/>
        <dbReference type="ChEBI" id="CHEBI:15377"/>
        <dbReference type="ChEBI" id="CHEBI:43474"/>
        <dbReference type="ChEBI" id="CHEBI:64124"/>
        <dbReference type="ChEBI" id="CHEBI:64795"/>
    </reaction>
    <physiologicalReaction direction="left-to-right" evidence="2">
        <dbReference type="Rhea" id="RHEA:33068"/>
    </physiologicalReaction>
</comment>
<comment type="subcellular location">
    <subcellularLocation>
        <location evidence="2">Endoplasmic reticulum membrane</location>
        <topology evidence="2">Multi-pass membrane protein</topology>
    </subcellularLocation>
</comment>
<comment type="tissue specificity">
    <text evidence="6">Highly expressed in pancreatic islets. Expressed in lung, small interstince, colon, kideny and brain.</text>
</comment>
<comment type="developmental stage">
    <text evidence="5">Developmentally regulated. Expression during kidney development increases around 8 fold from 11.5 dpc and adult. Highest expression is found in the ureteric bud.</text>
</comment>
<comment type="disruption phenotype">
    <text evidence="6">Mutans are viable into the adulthod. They exhibit smaller pancreatic islets, defective beta-cell proliferation and decreased blood insulin levels after treatment with a high-fat diet (PubMed:27059959). Beta-cells show increased expression of proteins characteristic of the endoplasmic reticulum stress response (PubMed:27059959).</text>
</comment>
<comment type="similarity">
    <text evidence="7">Belongs to the type 2 lipid phosphate phosphatase family.</text>
</comment>
<accession>Q810K3</accession>
<accession>B2RWL5</accession>
<feature type="chain" id="PRO_0000114481" description="Sphingosine-1-phosphate phosphatase 2">
    <location>
        <begin position="1"/>
        <end position="354"/>
    </location>
</feature>
<feature type="transmembrane region" description="Helical" evidence="4">
    <location>
        <begin position="43"/>
        <end position="63"/>
    </location>
</feature>
<feature type="transmembrane region" description="Helical" evidence="4">
    <location>
        <begin position="76"/>
        <end position="96"/>
    </location>
</feature>
<feature type="transmembrane region" description="Helical" evidence="4">
    <location>
        <begin position="115"/>
        <end position="135"/>
    </location>
</feature>
<feature type="transmembrane region" description="Helical" evidence="4">
    <location>
        <begin position="140"/>
        <end position="160"/>
    </location>
</feature>
<feature type="transmembrane region" description="Helical" evidence="4">
    <location>
        <begin position="173"/>
        <end position="193"/>
    </location>
</feature>
<feature type="transmembrane region" description="Helical" evidence="4">
    <location>
        <begin position="202"/>
        <end position="222"/>
    </location>
</feature>
<feature type="transmembrane region" description="Helical" evidence="4">
    <location>
        <begin position="235"/>
        <end position="255"/>
    </location>
</feature>
<feature type="transmembrane region" description="Helical" evidence="4">
    <location>
        <begin position="273"/>
        <end position="293"/>
    </location>
</feature>
<feature type="transmembrane region" description="Helical" evidence="4">
    <location>
        <begin position="334"/>
        <end position="354"/>
    </location>
</feature>
<feature type="region of interest" description="Phosphatase sequence motif I" evidence="7">
    <location>
        <begin position="91"/>
        <end position="99"/>
    </location>
</feature>
<feature type="region of interest" description="Phosphatase sequence motif II" evidence="7">
    <location>
        <begin position="118"/>
        <end position="121"/>
    </location>
</feature>
<feature type="region of interest" description="Phosphatase sequence motif III" evidence="7">
    <location>
        <begin position="161"/>
        <end position="172"/>
    </location>
</feature>
<feature type="active site" description="Proton donor" evidence="1">
    <location>
        <position position="121"/>
    </location>
</feature>
<feature type="active site" description="Nucleophile" evidence="1">
    <location>
        <position position="168"/>
    </location>
</feature>
<feature type="site" description="Stabilizes the active site histidine for nucleophilic attack" evidence="1">
    <location>
        <position position="172"/>
    </location>
</feature>
<reference key="1">
    <citation type="journal article" date="2004" name="Genome Res.">
        <title>The status, quality, and expansion of the NIH full-length cDNA project: the Mammalian Gene Collection (MGC).</title>
        <authorList>
            <consortium name="The MGC Project Team"/>
        </authorList>
    </citation>
    <scope>NUCLEOTIDE SEQUENCE [LARGE SCALE MRNA]</scope>
    <source>
        <strain>FVB/N</strain>
        <tissue>Brain</tissue>
        <tissue>Colon</tissue>
    </source>
</reference>
<reference key="2">
    <citation type="journal article" date="2009" name="Am. J. Physiol.">
        <title>Dynamic regulation of sphingosine-1-phosphate homeostasis during development of mouse metanephric kidney.</title>
        <authorList>
            <person name="Kirby R.J."/>
            <person name="Jin Y."/>
            <person name="Fu J."/>
            <person name="Cubillos J."/>
            <person name="Swertfeger D."/>
            <person name="Arend L.J."/>
        </authorList>
    </citation>
    <scope>DEVELOPMENTAL STAGE</scope>
    <source>
        <strain>CD-1</strain>
    </source>
</reference>
<reference key="3">
    <citation type="journal article" date="2016" name="J. Biol. Chem.">
        <title>Sphingosine-1-phosphate Phosphatase 2 Regulates Pancreatic Islet beta-Cell Endoplasmic Reticulum Stress and Proliferation.</title>
        <authorList>
            <person name="Taguchi Y."/>
            <person name="Allende M.L."/>
            <person name="Mizukami H."/>
            <person name="Cook E.K."/>
            <person name="Gavrilova O."/>
            <person name="Tuymetova G."/>
            <person name="Clarke B.A."/>
            <person name="Chen W."/>
            <person name="Olivera A."/>
            <person name="Proia R.L."/>
        </authorList>
    </citation>
    <scope>FUNCTION</scope>
    <scope>DISRUPTION PHENOTYPE</scope>
    <scope>TISSUE SPECIFICITY</scope>
    <scope>CATALYTIC ACTIVITY</scope>
</reference>
<evidence type="ECO:0000250" key="1">
    <source>
        <dbReference type="UniProtKB" id="P0A924"/>
    </source>
</evidence>
<evidence type="ECO:0000250" key="2">
    <source>
        <dbReference type="UniProtKB" id="Q8IWX5"/>
    </source>
</evidence>
<evidence type="ECO:0000250" key="3">
    <source>
        <dbReference type="UniProtKB" id="Q9BX95"/>
    </source>
</evidence>
<evidence type="ECO:0000255" key="4"/>
<evidence type="ECO:0000269" key="5">
    <source>
    </source>
</evidence>
<evidence type="ECO:0000269" key="6">
    <source>
    </source>
</evidence>
<evidence type="ECO:0000305" key="7"/>
<evidence type="ECO:0000305" key="8">
    <source>
    </source>
</evidence>
<evidence type="ECO:0000312" key="9">
    <source>
        <dbReference type="MGI" id="MGI:3589109"/>
    </source>
</evidence>
<proteinExistence type="evidence at protein level"/>
<protein>
    <recommendedName>
        <fullName evidence="7">Sphingosine-1-phosphate phosphatase 2</fullName>
        <shortName>SPPase2</shortName>
        <shortName>Spp2</shortName>
        <ecNumber evidence="6">3.1.3.-</ecNumber>
    </recommendedName>
    <alternativeName>
        <fullName>Sphingosine-1-phosphatase 2</fullName>
    </alternativeName>
</protein>
<gene>
    <name evidence="9" type="primary">Sgpp2</name>
</gene>
<sequence length="354" mass="40248">MAELLRSLRDSQLVARFQRRCGLFPAREASGEEHVVKNYFYYYLFRFSAALGQEVFYITFLPFTHWNIDPNLSRRLVVIWVLVMYIGQVAKDILKWPRPSFPPVVRLEKRIIAEYGMPSTHAMAATAISFTLLISTMDRYQYPFILGLMMAVVFSTLVCLSRLYTGMHTVLDILGGVLITAVLIALTYPAWTLIDSLDSASPLFPVCVIVVPFLLCYNYPVSDYYSPTRADTTTIVAAGAGVTLGFWINHFFQLVSKPTPSLPVIQNIPPLTTDMLVLGLTKFMVGIMLILLVRQLVQKLSLQVLFSWFKVVTRNKEARRRLEIEVPYKFVTYTSVGICATTFVPMLHRFLGLL</sequence>
<organism>
    <name type="scientific">Mus musculus</name>
    <name type="common">Mouse</name>
    <dbReference type="NCBI Taxonomy" id="10090"/>
    <lineage>
        <taxon>Eukaryota</taxon>
        <taxon>Metazoa</taxon>
        <taxon>Chordata</taxon>
        <taxon>Craniata</taxon>
        <taxon>Vertebrata</taxon>
        <taxon>Euteleostomi</taxon>
        <taxon>Mammalia</taxon>
        <taxon>Eutheria</taxon>
        <taxon>Euarchontoglires</taxon>
        <taxon>Glires</taxon>
        <taxon>Rodentia</taxon>
        <taxon>Myomorpha</taxon>
        <taxon>Muroidea</taxon>
        <taxon>Muridae</taxon>
        <taxon>Murinae</taxon>
        <taxon>Mus</taxon>
        <taxon>Mus</taxon>
    </lineage>
</organism>